<evidence type="ECO:0000255" key="1">
    <source>
        <dbReference type="HAMAP-Rule" id="MF_00268"/>
    </source>
</evidence>
<evidence type="ECO:0000256" key="2">
    <source>
        <dbReference type="SAM" id="MobiDB-lite"/>
    </source>
</evidence>
<organism>
    <name type="scientific">Staphylococcus aureus (strain COL)</name>
    <dbReference type="NCBI Taxonomy" id="93062"/>
    <lineage>
        <taxon>Bacteria</taxon>
        <taxon>Bacillati</taxon>
        <taxon>Bacillota</taxon>
        <taxon>Bacilli</taxon>
        <taxon>Bacillales</taxon>
        <taxon>Staphylococcaceae</taxon>
        <taxon>Staphylococcus</taxon>
    </lineage>
</organism>
<comment type="function">
    <text evidence="1">Can catalyze the hydrolysis of ATP in the presence of single-stranded DNA, the ATP-dependent uptake of single-stranded DNA by duplex DNA, and the ATP-dependent hybridization of homologous single-stranded DNAs. It interacts with LexA causing its activation and leading to its autocatalytic cleavage.</text>
</comment>
<comment type="subcellular location">
    <subcellularLocation>
        <location evidence="1">Cytoplasm</location>
    </subcellularLocation>
</comment>
<comment type="similarity">
    <text evidence="1">Belongs to the RecA family.</text>
</comment>
<protein>
    <recommendedName>
        <fullName evidence="1">Protein RecA</fullName>
    </recommendedName>
    <alternativeName>
        <fullName evidence="1">Recombinase A</fullName>
    </alternativeName>
</protein>
<dbReference type="EMBL" id="CP000046">
    <property type="protein sequence ID" value="AAW38135.1"/>
    <property type="molecule type" value="Genomic_DNA"/>
</dbReference>
<dbReference type="RefSeq" id="WP_000368166.1">
    <property type="nucleotide sequence ID" value="NZ_JBGOFO010000002.1"/>
</dbReference>
<dbReference type="SMR" id="Q5HGE6"/>
<dbReference type="KEGG" id="sac:SACOL1304"/>
<dbReference type="HOGENOM" id="CLU_040469_1_2_9"/>
<dbReference type="Proteomes" id="UP000000530">
    <property type="component" value="Chromosome"/>
</dbReference>
<dbReference type="GO" id="GO:0005829">
    <property type="term" value="C:cytosol"/>
    <property type="evidence" value="ECO:0007669"/>
    <property type="project" value="TreeGrafter"/>
</dbReference>
<dbReference type="GO" id="GO:0005524">
    <property type="term" value="F:ATP binding"/>
    <property type="evidence" value="ECO:0007669"/>
    <property type="project" value="UniProtKB-UniRule"/>
</dbReference>
<dbReference type="GO" id="GO:0016887">
    <property type="term" value="F:ATP hydrolysis activity"/>
    <property type="evidence" value="ECO:0007669"/>
    <property type="project" value="InterPro"/>
</dbReference>
<dbReference type="GO" id="GO:0140664">
    <property type="term" value="F:ATP-dependent DNA damage sensor activity"/>
    <property type="evidence" value="ECO:0007669"/>
    <property type="project" value="InterPro"/>
</dbReference>
<dbReference type="GO" id="GO:0003684">
    <property type="term" value="F:damaged DNA binding"/>
    <property type="evidence" value="ECO:0007669"/>
    <property type="project" value="UniProtKB-UniRule"/>
</dbReference>
<dbReference type="GO" id="GO:0003697">
    <property type="term" value="F:single-stranded DNA binding"/>
    <property type="evidence" value="ECO:0007669"/>
    <property type="project" value="UniProtKB-UniRule"/>
</dbReference>
<dbReference type="GO" id="GO:0006310">
    <property type="term" value="P:DNA recombination"/>
    <property type="evidence" value="ECO:0007669"/>
    <property type="project" value="UniProtKB-UniRule"/>
</dbReference>
<dbReference type="GO" id="GO:0006281">
    <property type="term" value="P:DNA repair"/>
    <property type="evidence" value="ECO:0007669"/>
    <property type="project" value="UniProtKB-UniRule"/>
</dbReference>
<dbReference type="GO" id="GO:0009432">
    <property type="term" value="P:SOS response"/>
    <property type="evidence" value="ECO:0007669"/>
    <property type="project" value="UniProtKB-UniRule"/>
</dbReference>
<dbReference type="CDD" id="cd00983">
    <property type="entry name" value="RecA"/>
    <property type="match status" value="1"/>
</dbReference>
<dbReference type="FunFam" id="3.40.50.300:FF:000087">
    <property type="entry name" value="Recombinase RecA"/>
    <property type="match status" value="1"/>
</dbReference>
<dbReference type="Gene3D" id="3.40.50.300">
    <property type="entry name" value="P-loop containing nucleotide triphosphate hydrolases"/>
    <property type="match status" value="1"/>
</dbReference>
<dbReference type="HAMAP" id="MF_00268">
    <property type="entry name" value="RecA"/>
    <property type="match status" value="1"/>
</dbReference>
<dbReference type="InterPro" id="IPR003593">
    <property type="entry name" value="AAA+_ATPase"/>
</dbReference>
<dbReference type="InterPro" id="IPR013765">
    <property type="entry name" value="DNA_recomb/repair_RecA"/>
</dbReference>
<dbReference type="InterPro" id="IPR020584">
    <property type="entry name" value="DNA_recomb/repair_RecA_CS"/>
</dbReference>
<dbReference type="InterPro" id="IPR027417">
    <property type="entry name" value="P-loop_NTPase"/>
</dbReference>
<dbReference type="InterPro" id="IPR049261">
    <property type="entry name" value="RecA-like_C"/>
</dbReference>
<dbReference type="InterPro" id="IPR049428">
    <property type="entry name" value="RecA-like_N"/>
</dbReference>
<dbReference type="InterPro" id="IPR020588">
    <property type="entry name" value="RecA_ATP-bd"/>
</dbReference>
<dbReference type="InterPro" id="IPR023400">
    <property type="entry name" value="RecA_C_sf"/>
</dbReference>
<dbReference type="InterPro" id="IPR020587">
    <property type="entry name" value="RecA_monomer-monomer_interface"/>
</dbReference>
<dbReference type="NCBIfam" id="TIGR02012">
    <property type="entry name" value="tigrfam_recA"/>
    <property type="match status" value="1"/>
</dbReference>
<dbReference type="PANTHER" id="PTHR45900:SF1">
    <property type="entry name" value="MITOCHONDRIAL DNA REPAIR PROTEIN RECA HOMOLOG-RELATED"/>
    <property type="match status" value="1"/>
</dbReference>
<dbReference type="PANTHER" id="PTHR45900">
    <property type="entry name" value="RECA"/>
    <property type="match status" value="1"/>
</dbReference>
<dbReference type="Pfam" id="PF00154">
    <property type="entry name" value="RecA"/>
    <property type="match status" value="1"/>
</dbReference>
<dbReference type="Pfam" id="PF21096">
    <property type="entry name" value="RecA_C"/>
    <property type="match status" value="1"/>
</dbReference>
<dbReference type="PRINTS" id="PR00142">
    <property type="entry name" value="RECA"/>
</dbReference>
<dbReference type="SMART" id="SM00382">
    <property type="entry name" value="AAA"/>
    <property type="match status" value="1"/>
</dbReference>
<dbReference type="SUPFAM" id="SSF52540">
    <property type="entry name" value="P-loop containing nucleoside triphosphate hydrolases"/>
    <property type="match status" value="1"/>
</dbReference>
<dbReference type="SUPFAM" id="SSF54752">
    <property type="entry name" value="RecA protein, C-terminal domain"/>
    <property type="match status" value="1"/>
</dbReference>
<dbReference type="PROSITE" id="PS00321">
    <property type="entry name" value="RECA_1"/>
    <property type="match status" value="1"/>
</dbReference>
<dbReference type="PROSITE" id="PS50162">
    <property type="entry name" value="RECA_2"/>
    <property type="match status" value="1"/>
</dbReference>
<dbReference type="PROSITE" id="PS50163">
    <property type="entry name" value="RECA_3"/>
    <property type="match status" value="1"/>
</dbReference>
<name>RECA_STAAC</name>
<reference key="1">
    <citation type="journal article" date="2005" name="J. Bacteriol.">
        <title>Insights on evolution of virulence and resistance from the complete genome analysis of an early methicillin-resistant Staphylococcus aureus strain and a biofilm-producing methicillin-resistant Staphylococcus epidermidis strain.</title>
        <authorList>
            <person name="Gill S.R."/>
            <person name="Fouts D.E."/>
            <person name="Archer G.L."/>
            <person name="Mongodin E.F."/>
            <person name="DeBoy R.T."/>
            <person name="Ravel J."/>
            <person name="Paulsen I.T."/>
            <person name="Kolonay J.F."/>
            <person name="Brinkac L.M."/>
            <person name="Beanan M.J."/>
            <person name="Dodson R.J."/>
            <person name="Daugherty S.C."/>
            <person name="Madupu R."/>
            <person name="Angiuoli S.V."/>
            <person name="Durkin A.S."/>
            <person name="Haft D.H."/>
            <person name="Vamathevan J.J."/>
            <person name="Khouri H."/>
            <person name="Utterback T.R."/>
            <person name="Lee C."/>
            <person name="Dimitrov G."/>
            <person name="Jiang L."/>
            <person name="Qin H."/>
            <person name="Weidman J."/>
            <person name="Tran K."/>
            <person name="Kang K.H."/>
            <person name="Hance I.R."/>
            <person name="Nelson K.E."/>
            <person name="Fraser C.M."/>
        </authorList>
    </citation>
    <scope>NUCLEOTIDE SEQUENCE [LARGE SCALE GENOMIC DNA]</scope>
    <source>
        <strain>COL</strain>
    </source>
</reference>
<gene>
    <name evidence="1" type="primary">recA</name>
    <name type="ordered locus">SACOL1304</name>
</gene>
<sequence length="347" mass="37657">MDNDRQKALDTVIKNMEKSFGKGAVMKLGDNIGRRVSTTSTGSVTLDNALGVGGYPKGRIIEIYGPESSGKTTVALHAIAEVQSNGGVAAFIDAEHALDPEYAQALGVDIDNLYLSQPDHGEQGLEIAEAFVRSGAVDIVVVDSVAALTPKAEIEGEMGDTHVGLQARLMSQALRKLSGAISKSNTTAIFINQIREKVGVMFGNPETTPGGRALKFYSSVRLEVRRAEQLKQGQEIVGNRTKIKVVKNKVAPPFRVAEVDIMYGQGISKEGELIDLGVENDIVDKSGAWYSYNGERMGQGKENVKMYLKENPQIKEEIDRKLREKLGISDGDVEETEDAPKSLFDEE</sequence>
<keyword id="KW-0067">ATP-binding</keyword>
<keyword id="KW-0963">Cytoplasm</keyword>
<keyword id="KW-0227">DNA damage</keyword>
<keyword id="KW-0233">DNA recombination</keyword>
<keyword id="KW-0234">DNA repair</keyword>
<keyword id="KW-0238">DNA-binding</keyword>
<keyword id="KW-0547">Nucleotide-binding</keyword>
<keyword id="KW-0742">SOS response</keyword>
<proteinExistence type="inferred from homology"/>
<accession>Q5HGE6</accession>
<feature type="chain" id="PRO_0000122838" description="Protein RecA">
    <location>
        <begin position="1"/>
        <end position="347"/>
    </location>
</feature>
<feature type="region of interest" description="Disordered" evidence="2">
    <location>
        <begin position="325"/>
        <end position="347"/>
    </location>
</feature>
<feature type="compositionally biased region" description="Basic and acidic residues" evidence="2">
    <location>
        <begin position="338"/>
        <end position="347"/>
    </location>
</feature>
<feature type="binding site" evidence="1">
    <location>
        <begin position="65"/>
        <end position="72"/>
    </location>
    <ligand>
        <name>ATP</name>
        <dbReference type="ChEBI" id="CHEBI:30616"/>
    </ligand>
</feature>